<dbReference type="EC" id="1.-.-.-"/>
<dbReference type="EMBL" id="CU329670">
    <property type="protein sequence ID" value="CAA93347.1"/>
    <property type="molecule type" value="Genomic_DNA"/>
</dbReference>
<dbReference type="PIR" id="T38888">
    <property type="entry name" value="T38888"/>
</dbReference>
<dbReference type="RefSeq" id="NP_594344.1">
    <property type="nucleotide sequence ID" value="NM_001019765.2"/>
</dbReference>
<dbReference type="SMR" id="Q10216"/>
<dbReference type="BioGRID" id="279788">
    <property type="interactions" value="2"/>
</dbReference>
<dbReference type="FunCoup" id="Q10216">
    <property type="interactions" value="3"/>
</dbReference>
<dbReference type="STRING" id="284812.Q10216"/>
<dbReference type="iPTMnet" id="Q10216"/>
<dbReference type="PaxDb" id="4896-SPAC4H3.08.1"/>
<dbReference type="EnsemblFungi" id="SPAC4H3.08.1">
    <property type="protein sequence ID" value="SPAC4H3.08.1:pep"/>
    <property type="gene ID" value="SPAC4H3.08"/>
</dbReference>
<dbReference type="KEGG" id="spo:2543366"/>
<dbReference type="PomBase" id="SPAC4H3.08"/>
<dbReference type="VEuPathDB" id="FungiDB:SPAC4H3.08"/>
<dbReference type="eggNOG" id="KOG0725">
    <property type="taxonomic scope" value="Eukaryota"/>
</dbReference>
<dbReference type="HOGENOM" id="CLU_010194_4_1_1"/>
<dbReference type="InParanoid" id="Q10216"/>
<dbReference type="OMA" id="AAYQMSQ"/>
<dbReference type="PhylomeDB" id="Q10216"/>
<dbReference type="PRO" id="PR:Q10216"/>
<dbReference type="Proteomes" id="UP000002485">
    <property type="component" value="Chromosome I"/>
</dbReference>
<dbReference type="GO" id="GO:0005829">
    <property type="term" value="C:cytosol"/>
    <property type="evidence" value="ECO:0007005"/>
    <property type="project" value="PomBase"/>
</dbReference>
<dbReference type="GO" id="GO:0005634">
    <property type="term" value="C:nucleus"/>
    <property type="evidence" value="ECO:0007005"/>
    <property type="project" value="PomBase"/>
</dbReference>
<dbReference type="GO" id="GO:0003857">
    <property type="term" value="F:3-hydroxyacyl-CoA dehydrogenase activity"/>
    <property type="evidence" value="ECO:0000266"/>
    <property type="project" value="PomBase"/>
</dbReference>
<dbReference type="GO" id="GO:0006631">
    <property type="term" value="P:fatty acid metabolic process"/>
    <property type="evidence" value="ECO:0000250"/>
    <property type="project" value="PomBase"/>
</dbReference>
<dbReference type="CDD" id="cd05355">
    <property type="entry name" value="SDR_c1"/>
    <property type="match status" value="1"/>
</dbReference>
<dbReference type="FunFam" id="3.40.50.720:FF:000290">
    <property type="entry name" value="SDR family oxidoreductase"/>
    <property type="match status" value="1"/>
</dbReference>
<dbReference type="Gene3D" id="3.40.50.720">
    <property type="entry name" value="NAD(P)-binding Rossmann-like Domain"/>
    <property type="match status" value="1"/>
</dbReference>
<dbReference type="InterPro" id="IPR036291">
    <property type="entry name" value="NAD(P)-bd_dom_sf"/>
</dbReference>
<dbReference type="InterPro" id="IPR020904">
    <property type="entry name" value="Sc_DH/Rdtase_CS"/>
</dbReference>
<dbReference type="InterPro" id="IPR002347">
    <property type="entry name" value="SDR_fam"/>
</dbReference>
<dbReference type="PANTHER" id="PTHR48107">
    <property type="entry name" value="NADPH-DEPENDENT ALDEHYDE REDUCTASE-LIKE PROTEIN, CHLOROPLASTIC-RELATED"/>
    <property type="match status" value="1"/>
</dbReference>
<dbReference type="PANTHER" id="PTHR48107:SF26">
    <property type="entry name" value="OXIDOREDUCTASE, SHORT-CHAIN DEHYDROGENASE_REDUCTASE FAMILY (AFU_ORTHOLOGUE AFUA_4G05870)"/>
    <property type="match status" value="1"/>
</dbReference>
<dbReference type="Pfam" id="PF13561">
    <property type="entry name" value="adh_short_C2"/>
    <property type="match status" value="1"/>
</dbReference>
<dbReference type="PRINTS" id="PR00081">
    <property type="entry name" value="GDHRDH"/>
</dbReference>
<dbReference type="PRINTS" id="PR00080">
    <property type="entry name" value="SDRFAMILY"/>
</dbReference>
<dbReference type="SUPFAM" id="SSF51735">
    <property type="entry name" value="NAD(P)-binding Rossmann-fold domains"/>
    <property type="match status" value="1"/>
</dbReference>
<dbReference type="PROSITE" id="PS00061">
    <property type="entry name" value="ADH_SHORT"/>
    <property type="match status" value="1"/>
</dbReference>
<protein>
    <recommendedName>
        <fullName>Uncharacterized oxidoreductase C4H3.08</fullName>
        <ecNumber>1.-.-.-</ecNumber>
    </recommendedName>
</protein>
<sequence length="286" mass="31336">MDPVPSTQTQKWPGKHADLDPEPSLLRYCDGRVHVGSGKLAEKKTLLTGGDSGIGKAAAVMFAREGSDLVISCLPEERDDAEVTRDLIEREGRNCWIWEGKLDKSDNCRDLVDFALKKLGWIDVLVNNIAYQQVAQSIEDIDDEQWDLTFKTNIFSFFWVTKAAISHMKSGSSIVNCSSINAYVGRPDLLDYTSTKGAITAFTRGLSNQYAQHGIRVNAVAPGPIYTPLVSSTFPKEKIELSDQVPLGRMGQPVEVASCYLFLACSDGGYMTGQTLHPNGGTVINN</sequence>
<feature type="chain" id="PRO_0000054875" description="Uncharacterized oxidoreductase C4H3.08">
    <location>
        <begin position="1"/>
        <end position="286"/>
    </location>
</feature>
<feature type="active site" description="Proton donor" evidence="2">
    <location>
        <position position="178"/>
    </location>
</feature>
<feature type="active site" description="Proton acceptor" evidence="3">
    <location>
        <position position="192"/>
    </location>
</feature>
<feature type="active site" description="Lowers pKa of active site Tyr" evidence="2">
    <location>
        <position position="196"/>
    </location>
</feature>
<feature type="binding site" evidence="1">
    <location>
        <position position="54"/>
    </location>
    <ligand>
        <name>NADP(+)</name>
        <dbReference type="ChEBI" id="CHEBI:58349"/>
    </ligand>
</feature>
<feature type="binding site" evidence="2">
    <location>
        <position position="128"/>
    </location>
    <ligand>
        <name>NADP(+)</name>
        <dbReference type="ChEBI" id="CHEBI:58349"/>
    </ligand>
</feature>
<feature type="binding site" evidence="1">
    <location>
        <position position="162"/>
    </location>
    <ligand>
        <name>NADP(+)</name>
        <dbReference type="ChEBI" id="CHEBI:58349"/>
    </ligand>
</feature>
<feature type="binding site" evidence="2">
    <location>
        <position position="192"/>
    </location>
    <ligand>
        <name>NADP(+)</name>
        <dbReference type="ChEBI" id="CHEBI:58349"/>
    </ligand>
</feature>
<feature type="binding site" evidence="2">
    <location>
        <position position="196"/>
    </location>
    <ligand>
        <name>NADP(+)</name>
        <dbReference type="ChEBI" id="CHEBI:58349"/>
    </ligand>
</feature>
<feature type="binding site" evidence="2">
    <location>
        <position position="225"/>
    </location>
    <ligand>
        <name>NADP(+)</name>
        <dbReference type="ChEBI" id="CHEBI:58349"/>
    </ligand>
</feature>
<feature type="binding site" evidence="1">
    <location>
        <position position="227"/>
    </location>
    <ligand>
        <name>NADP(+)</name>
        <dbReference type="ChEBI" id="CHEBI:58349"/>
    </ligand>
</feature>
<evidence type="ECO:0000250" key="1">
    <source>
        <dbReference type="UniProtKB" id="L0E2Z4"/>
    </source>
</evidence>
<evidence type="ECO:0000250" key="2">
    <source>
        <dbReference type="UniProtKB" id="O93868"/>
    </source>
</evidence>
<evidence type="ECO:0000255" key="3">
    <source>
        <dbReference type="PROSITE-ProRule" id="PRU10001"/>
    </source>
</evidence>
<evidence type="ECO:0000305" key="4"/>
<proteinExistence type="inferred from homology"/>
<organism>
    <name type="scientific">Schizosaccharomyces pombe (strain 972 / ATCC 24843)</name>
    <name type="common">Fission yeast</name>
    <dbReference type="NCBI Taxonomy" id="284812"/>
    <lineage>
        <taxon>Eukaryota</taxon>
        <taxon>Fungi</taxon>
        <taxon>Dikarya</taxon>
        <taxon>Ascomycota</taxon>
        <taxon>Taphrinomycotina</taxon>
        <taxon>Schizosaccharomycetes</taxon>
        <taxon>Schizosaccharomycetales</taxon>
        <taxon>Schizosaccharomycetaceae</taxon>
        <taxon>Schizosaccharomyces</taxon>
    </lineage>
</organism>
<name>YAY8_SCHPO</name>
<keyword id="KW-0521">NADP</keyword>
<keyword id="KW-0560">Oxidoreductase</keyword>
<keyword id="KW-1185">Reference proteome</keyword>
<reference key="1">
    <citation type="journal article" date="2002" name="Nature">
        <title>The genome sequence of Schizosaccharomyces pombe.</title>
        <authorList>
            <person name="Wood V."/>
            <person name="Gwilliam R."/>
            <person name="Rajandream M.A."/>
            <person name="Lyne M.H."/>
            <person name="Lyne R."/>
            <person name="Stewart A."/>
            <person name="Sgouros J.G."/>
            <person name="Peat N."/>
            <person name="Hayles J."/>
            <person name="Baker S.G."/>
            <person name="Basham D."/>
            <person name="Bowman S."/>
            <person name="Brooks K."/>
            <person name="Brown D."/>
            <person name="Brown S."/>
            <person name="Chillingworth T."/>
            <person name="Churcher C.M."/>
            <person name="Collins M."/>
            <person name="Connor R."/>
            <person name="Cronin A."/>
            <person name="Davis P."/>
            <person name="Feltwell T."/>
            <person name="Fraser A."/>
            <person name="Gentles S."/>
            <person name="Goble A."/>
            <person name="Hamlin N."/>
            <person name="Harris D.E."/>
            <person name="Hidalgo J."/>
            <person name="Hodgson G."/>
            <person name="Holroyd S."/>
            <person name="Hornsby T."/>
            <person name="Howarth S."/>
            <person name="Huckle E.J."/>
            <person name="Hunt S."/>
            <person name="Jagels K."/>
            <person name="James K.D."/>
            <person name="Jones L."/>
            <person name="Jones M."/>
            <person name="Leather S."/>
            <person name="McDonald S."/>
            <person name="McLean J."/>
            <person name="Mooney P."/>
            <person name="Moule S."/>
            <person name="Mungall K.L."/>
            <person name="Murphy L.D."/>
            <person name="Niblett D."/>
            <person name="Odell C."/>
            <person name="Oliver K."/>
            <person name="O'Neil S."/>
            <person name="Pearson D."/>
            <person name="Quail M.A."/>
            <person name="Rabbinowitsch E."/>
            <person name="Rutherford K.M."/>
            <person name="Rutter S."/>
            <person name="Saunders D."/>
            <person name="Seeger K."/>
            <person name="Sharp S."/>
            <person name="Skelton J."/>
            <person name="Simmonds M.N."/>
            <person name="Squares R."/>
            <person name="Squares S."/>
            <person name="Stevens K."/>
            <person name="Taylor K."/>
            <person name="Taylor R.G."/>
            <person name="Tivey A."/>
            <person name="Walsh S.V."/>
            <person name="Warren T."/>
            <person name="Whitehead S."/>
            <person name="Woodward J.R."/>
            <person name="Volckaert G."/>
            <person name="Aert R."/>
            <person name="Robben J."/>
            <person name="Grymonprez B."/>
            <person name="Weltjens I."/>
            <person name="Vanstreels E."/>
            <person name="Rieger M."/>
            <person name="Schaefer M."/>
            <person name="Mueller-Auer S."/>
            <person name="Gabel C."/>
            <person name="Fuchs M."/>
            <person name="Duesterhoeft A."/>
            <person name="Fritzc C."/>
            <person name="Holzer E."/>
            <person name="Moestl D."/>
            <person name="Hilbert H."/>
            <person name="Borzym K."/>
            <person name="Langer I."/>
            <person name="Beck A."/>
            <person name="Lehrach H."/>
            <person name="Reinhardt R."/>
            <person name="Pohl T.M."/>
            <person name="Eger P."/>
            <person name="Zimmermann W."/>
            <person name="Wedler H."/>
            <person name="Wambutt R."/>
            <person name="Purnelle B."/>
            <person name="Goffeau A."/>
            <person name="Cadieu E."/>
            <person name="Dreano S."/>
            <person name="Gloux S."/>
            <person name="Lelaure V."/>
            <person name="Mottier S."/>
            <person name="Galibert F."/>
            <person name="Aves S.J."/>
            <person name="Xiang Z."/>
            <person name="Hunt C."/>
            <person name="Moore K."/>
            <person name="Hurst S.M."/>
            <person name="Lucas M."/>
            <person name="Rochet M."/>
            <person name="Gaillardin C."/>
            <person name="Tallada V.A."/>
            <person name="Garzon A."/>
            <person name="Thode G."/>
            <person name="Daga R.R."/>
            <person name="Cruzado L."/>
            <person name="Jimenez J."/>
            <person name="Sanchez M."/>
            <person name="del Rey F."/>
            <person name="Benito J."/>
            <person name="Dominguez A."/>
            <person name="Revuelta J.L."/>
            <person name="Moreno S."/>
            <person name="Armstrong J."/>
            <person name="Forsburg S.L."/>
            <person name="Cerutti L."/>
            <person name="Lowe T."/>
            <person name="McCombie W.R."/>
            <person name="Paulsen I."/>
            <person name="Potashkin J."/>
            <person name="Shpakovski G.V."/>
            <person name="Ussery D."/>
            <person name="Barrell B.G."/>
            <person name="Nurse P."/>
        </authorList>
    </citation>
    <scope>NUCLEOTIDE SEQUENCE [LARGE SCALE GENOMIC DNA]</scope>
    <source>
        <strain>972 / ATCC 24843</strain>
    </source>
</reference>
<accession>Q10216</accession>
<comment type="similarity">
    <text evidence="4">Belongs to the short-chain dehydrogenases/reductases (SDR) family.</text>
</comment>
<gene>
    <name type="ORF">SPAC4H3.08</name>
</gene>